<organism>
    <name type="scientific">Xenopus laevis</name>
    <name type="common">African clawed frog</name>
    <dbReference type="NCBI Taxonomy" id="8355"/>
    <lineage>
        <taxon>Eukaryota</taxon>
        <taxon>Metazoa</taxon>
        <taxon>Chordata</taxon>
        <taxon>Craniata</taxon>
        <taxon>Vertebrata</taxon>
        <taxon>Euteleostomi</taxon>
        <taxon>Amphibia</taxon>
        <taxon>Batrachia</taxon>
        <taxon>Anura</taxon>
        <taxon>Pipoidea</taxon>
        <taxon>Pipidae</taxon>
        <taxon>Xenopodinae</taxon>
        <taxon>Xenopus</taxon>
        <taxon>Xenopus</taxon>
    </lineage>
</organism>
<evidence type="ECO:0000250" key="1">
    <source>
        <dbReference type="UniProtKB" id="Q9NQR1"/>
    </source>
</evidence>
<evidence type="ECO:0000255" key="2">
    <source>
        <dbReference type="PROSITE-ProRule" id="PRU00190"/>
    </source>
</evidence>
<evidence type="ECO:0000255" key="3">
    <source>
        <dbReference type="PROSITE-ProRule" id="PRU00904"/>
    </source>
</evidence>
<evidence type="ECO:0000256" key="4">
    <source>
        <dbReference type="SAM" id="MobiDB-lite"/>
    </source>
</evidence>
<evidence type="ECO:0000269" key="5">
    <source>
    </source>
</evidence>
<evidence type="ECO:0000303" key="6">
    <source>
    </source>
</evidence>
<evidence type="ECO:0000305" key="7"/>
<feature type="chain" id="PRO_0000317001" description="N-lysine methyltransferase KMT5A-B">
    <location>
        <begin position="1"/>
        <end position="336"/>
    </location>
</feature>
<feature type="domain" description="SET" evidence="2">
    <location>
        <begin position="200"/>
        <end position="321"/>
    </location>
</feature>
<feature type="region of interest" description="Disordered" evidence="4">
    <location>
        <begin position="1"/>
        <end position="107"/>
    </location>
</feature>
<feature type="region of interest" description="Disordered" evidence="4">
    <location>
        <begin position="141"/>
        <end position="165"/>
    </location>
</feature>
<feature type="compositionally biased region" description="Basic and acidic residues" evidence="4">
    <location>
        <begin position="67"/>
        <end position="93"/>
    </location>
</feature>
<feature type="compositionally biased region" description="Polar residues" evidence="4">
    <location>
        <begin position="95"/>
        <end position="104"/>
    </location>
</feature>
<feature type="compositionally biased region" description="Basic residues" evidence="4">
    <location>
        <begin position="146"/>
        <end position="162"/>
    </location>
</feature>
<feature type="binding site" evidence="3">
    <location>
        <begin position="210"/>
        <end position="212"/>
    </location>
    <ligand>
        <name>S-adenosyl-L-methionine</name>
        <dbReference type="ChEBI" id="CHEBI:59789"/>
    </ligand>
</feature>
<feature type="binding site" evidence="2 3">
    <location>
        <position position="255"/>
    </location>
    <ligand>
        <name>S-adenosyl-L-methionine</name>
        <dbReference type="ChEBI" id="CHEBI:59789"/>
    </ligand>
</feature>
<feature type="binding site" evidence="3">
    <location>
        <begin position="282"/>
        <end position="283"/>
    </location>
    <ligand>
        <name>S-adenosyl-L-methionine</name>
        <dbReference type="ChEBI" id="CHEBI:59789"/>
    </ligand>
</feature>
<feature type="splice variant" id="VSP_030852" description="In isoform 2." evidence="6">
    <location>
        <begin position="1"/>
        <end position="49"/>
    </location>
</feature>
<feature type="sequence conflict" description="In Ref. 1; AAM33245." evidence="7" ref="1">
    <original>A</original>
    <variation>V</variation>
    <location>
        <position position="69"/>
    </location>
</feature>
<gene>
    <name evidence="1" type="primary">kmt5a-b</name>
    <name type="synonym">mp36</name>
    <name type="synonym">setd8-b</name>
</gene>
<reference key="1">
    <citation type="journal article" date="2002" name="Curr. Biol.">
        <title>Timing of events in mitosis.</title>
        <authorList>
            <person name="Georgi A.B."/>
            <person name="Stukenberg P.T."/>
            <person name="Kirschner M.W."/>
        </authorList>
    </citation>
    <scope>NUCLEOTIDE SEQUENCE [MRNA] (ISOFORM 2)</scope>
    <scope>PHOSPHORYLATION</scope>
</reference>
<reference key="2">
    <citation type="submission" date="2005-08" db="EMBL/GenBank/DDBJ databases">
        <authorList>
            <consortium name="NIH - Xenopus Gene Collection (XGC) project"/>
        </authorList>
    </citation>
    <scope>NUCLEOTIDE SEQUENCE [LARGE SCALE MRNA] (ISOFORM 1)</scope>
    <source>
        <tissue>Egg</tissue>
    </source>
</reference>
<dbReference type="EC" id="2.1.1.-" evidence="1"/>
<dbReference type="EC" id="2.1.1.361" evidence="1"/>
<dbReference type="EMBL" id="AF419150">
    <property type="protein sequence ID" value="AAM33245.1"/>
    <property type="status" value="ALT_FRAME"/>
    <property type="molecule type" value="mRNA"/>
</dbReference>
<dbReference type="EMBL" id="BC100246">
    <property type="protein sequence ID" value="AAI00247.1"/>
    <property type="molecule type" value="mRNA"/>
</dbReference>
<dbReference type="RefSeq" id="NP_001082246.1">
    <property type="nucleotide sequence ID" value="NM_001088777.1"/>
</dbReference>
<dbReference type="SMR" id="Q498E6"/>
<dbReference type="GeneID" id="398318"/>
<dbReference type="KEGG" id="xla:398318"/>
<dbReference type="AGR" id="Xenbase:XB-GENE-17338855"/>
<dbReference type="CTD" id="398318"/>
<dbReference type="Xenbase" id="XB-GENE-17338855">
    <property type="gene designation" value="kmt5a.L"/>
</dbReference>
<dbReference type="OrthoDB" id="5560686at2759"/>
<dbReference type="Proteomes" id="UP000186698">
    <property type="component" value="Chromosome 1L"/>
</dbReference>
<dbReference type="Bgee" id="398318">
    <property type="expression patterns" value="Expressed in gastrula and 19 other cell types or tissues"/>
</dbReference>
<dbReference type="GO" id="GO:0005634">
    <property type="term" value="C:nucleus"/>
    <property type="evidence" value="ECO:0000318"/>
    <property type="project" value="GO_Central"/>
</dbReference>
<dbReference type="GO" id="GO:0005700">
    <property type="term" value="C:polytene chromosome"/>
    <property type="evidence" value="ECO:0000318"/>
    <property type="project" value="GO_Central"/>
</dbReference>
<dbReference type="GO" id="GO:0042799">
    <property type="term" value="F:histone H4K20 methyltransferase activity"/>
    <property type="evidence" value="ECO:0000318"/>
    <property type="project" value="GO_Central"/>
</dbReference>
<dbReference type="GO" id="GO:0140944">
    <property type="term" value="F:histone H4K20 monomethyltransferase activity"/>
    <property type="evidence" value="ECO:0007669"/>
    <property type="project" value="UniProtKB-EC"/>
</dbReference>
<dbReference type="GO" id="GO:0042054">
    <property type="term" value="F:histone methyltransferase activity"/>
    <property type="evidence" value="ECO:0000250"/>
    <property type="project" value="UniProtKB"/>
</dbReference>
<dbReference type="GO" id="GO:0051301">
    <property type="term" value="P:cell division"/>
    <property type="evidence" value="ECO:0007669"/>
    <property type="project" value="UniProtKB-KW"/>
</dbReference>
<dbReference type="GO" id="GO:0032259">
    <property type="term" value="P:methylation"/>
    <property type="evidence" value="ECO:0007669"/>
    <property type="project" value="UniProtKB-KW"/>
</dbReference>
<dbReference type="GO" id="GO:0043516">
    <property type="term" value="P:regulation of DNA damage response, signal transduction by p53 class mediator"/>
    <property type="evidence" value="ECO:0000318"/>
    <property type="project" value="GO_Central"/>
</dbReference>
<dbReference type="GO" id="GO:0006357">
    <property type="term" value="P:regulation of transcription by RNA polymerase II"/>
    <property type="evidence" value="ECO:0000318"/>
    <property type="project" value="GO_Central"/>
</dbReference>
<dbReference type="CDD" id="cd10528">
    <property type="entry name" value="SET_SETD8"/>
    <property type="match status" value="1"/>
</dbReference>
<dbReference type="FunFam" id="2.170.270.10:FF:000107">
    <property type="entry name" value="N-lysine methyltransferase KMT5A-B"/>
    <property type="match status" value="1"/>
</dbReference>
<dbReference type="Gene3D" id="2.170.270.10">
    <property type="entry name" value="SET domain"/>
    <property type="match status" value="1"/>
</dbReference>
<dbReference type="InterPro" id="IPR051760">
    <property type="entry name" value="KMT5A"/>
</dbReference>
<dbReference type="InterPro" id="IPR016858">
    <property type="entry name" value="KMT5A-like"/>
</dbReference>
<dbReference type="InterPro" id="IPR047266">
    <property type="entry name" value="KMT5A-like_SET"/>
</dbReference>
<dbReference type="InterPro" id="IPR001214">
    <property type="entry name" value="SET_dom"/>
</dbReference>
<dbReference type="InterPro" id="IPR046341">
    <property type="entry name" value="SET_dom_sf"/>
</dbReference>
<dbReference type="PANTHER" id="PTHR46167">
    <property type="entry name" value="N-LYSINE METHYLTRANSFERASE KMT5A"/>
    <property type="match status" value="1"/>
</dbReference>
<dbReference type="PANTHER" id="PTHR46167:SF1">
    <property type="entry name" value="N-LYSINE METHYLTRANSFERASE KMT5A"/>
    <property type="match status" value="1"/>
</dbReference>
<dbReference type="Pfam" id="PF00856">
    <property type="entry name" value="SET"/>
    <property type="match status" value="1"/>
</dbReference>
<dbReference type="PIRSF" id="PIRSF027717">
    <property type="entry name" value="Histone_H4-K20_mtfrase"/>
    <property type="match status" value="1"/>
</dbReference>
<dbReference type="SMART" id="SM00317">
    <property type="entry name" value="SET"/>
    <property type="match status" value="1"/>
</dbReference>
<dbReference type="SUPFAM" id="SSF82199">
    <property type="entry name" value="SET domain"/>
    <property type="match status" value="1"/>
</dbReference>
<dbReference type="PROSITE" id="PS51571">
    <property type="entry name" value="SAM_MT43_PR_SET"/>
    <property type="match status" value="1"/>
</dbReference>
<dbReference type="PROSITE" id="PS50280">
    <property type="entry name" value="SET"/>
    <property type="match status" value="1"/>
</dbReference>
<accession>Q498E6</accession>
<accession>Q8JJ44</accession>
<keyword id="KW-0025">Alternative splicing</keyword>
<keyword id="KW-0131">Cell cycle</keyword>
<keyword id="KW-0132">Cell division</keyword>
<keyword id="KW-0156">Chromatin regulator</keyword>
<keyword id="KW-0158">Chromosome</keyword>
<keyword id="KW-0489">Methyltransferase</keyword>
<keyword id="KW-0498">Mitosis</keyword>
<keyword id="KW-0539">Nucleus</keyword>
<keyword id="KW-0597">Phosphoprotein</keyword>
<keyword id="KW-1185">Reference proteome</keyword>
<keyword id="KW-0678">Repressor</keyword>
<keyword id="KW-0949">S-adenosyl-L-methionine</keyword>
<keyword id="KW-0804">Transcription</keyword>
<keyword id="KW-0805">Transcription regulation</keyword>
<keyword id="KW-0808">Transferase</keyword>
<protein>
    <recommendedName>
        <fullName>N-lysine methyltransferase KMT5A-B</fullName>
        <ecNumber evidence="1">2.1.1.-</ecNumber>
    </recommendedName>
    <alternativeName>
        <fullName>Histone-lysine N-methyltransferase KMT5A-B</fullName>
        <ecNumber evidence="1">2.1.1.361</ecNumber>
    </alternativeName>
    <alternativeName>
        <fullName evidence="1">Lysine-specific methylase 5A-B</fullName>
    </alternativeName>
    <alternativeName>
        <fullName>Mitotic phosphoprotein 36</fullName>
    </alternativeName>
    <alternativeName>
        <fullName>SET domain-containing protein 8-B</fullName>
    </alternativeName>
</protein>
<comment type="function">
    <text evidence="1">Protein-lysine N-methyltransferase that monomethylates both histones and non-histone proteins. Specifically monomethylates 'Lys-20' of histone H4 (H4K20me1). H4K20me1 is enriched during mitosis and represents a specific tag for epigenetic transcriptional repression. Mainly functions in euchromatin regions, thereby playing a central role in the silencing of euchromatic genes. Required for cell proliferation, probably by contributing to the maintenance of proper higher-order structure of DNA during mitosis. Involved in chromosome condensation and proper cytokinesis.</text>
</comment>
<comment type="catalytic activity">
    <reaction evidence="1 3">
        <text>L-lysyl(20)-[histone H4] + S-adenosyl-L-methionine = N(6)-methyl-L-lysyl(20)-[histone H4] + S-adenosyl-L-homocysteine + H(+)</text>
        <dbReference type="Rhea" id="RHEA:60344"/>
        <dbReference type="Rhea" id="RHEA-COMP:15554"/>
        <dbReference type="Rhea" id="RHEA-COMP:15555"/>
        <dbReference type="ChEBI" id="CHEBI:15378"/>
        <dbReference type="ChEBI" id="CHEBI:29969"/>
        <dbReference type="ChEBI" id="CHEBI:57856"/>
        <dbReference type="ChEBI" id="CHEBI:59789"/>
        <dbReference type="ChEBI" id="CHEBI:61929"/>
        <dbReference type="EC" id="2.1.1.361"/>
    </reaction>
</comment>
<comment type="catalytic activity">
    <reaction evidence="1">
        <text>L-lysyl-[protein] + S-adenosyl-L-methionine = N(6)-methyl-L-lysyl-[protein] + S-adenosyl-L-homocysteine + H(+)</text>
        <dbReference type="Rhea" id="RHEA:51736"/>
        <dbReference type="Rhea" id="RHEA-COMP:9752"/>
        <dbReference type="Rhea" id="RHEA-COMP:13053"/>
        <dbReference type="ChEBI" id="CHEBI:15378"/>
        <dbReference type="ChEBI" id="CHEBI:29969"/>
        <dbReference type="ChEBI" id="CHEBI:57856"/>
        <dbReference type="ChEBI" id="CHEBI:59789"/>
        <dbReference type="ChEBI" id="CHEBI:61929"/>
    </reaction>
</comment>
<comment type="subcellular location">
    <subcellularLocation>
        <location evidence="1">Nucleus</location>
    </subcellularLocation>
    <subcellularLocation>
        <location evidence="1">Chromosome</location>
    </subcellularLocation>
    <text evidence="1">Specifically localizes to mitotic chromosomes. Associates with silent chromatin on euchromatic arms (By similarity).</text>
</comment>
<comment type="alternative products">
    <event type="alternative splicing"/>
    <isoform>
        <id>Q498E6-1</id>
        <name>1</name>
        <sequence type="displayed"/>
    </isoform>
    <isoform>
        <id>Q498E6-2</id>
        <name>2</name>
        <sequence type="described" ref="VSP_030852"/>
    </isoform>
</comment>
<comment type="PTM">
    <text evidence="5">Phosphorylated during mitosis.</text>
</comment>
<comment type="similarity">
    <text evidence="3">Belongs to the class V-like SAM-binding methyltransferase superfamily. Histone-lysine methyltransferase family. PR/SET subfamily.</text>
</comment>
<comment type="sequence caution" evidence="7">
    <conflict type="frameshift">
        <sequence resource="EMBL-CDS" id="AAM33245"/>
    </conflict>
</comment>
<proteinExistence type="evidence at protein level"/>
<name>KT5AB_XENLA</name>
<sequence length="336" mass="38291">MGRGKKMSKPGDGRSGDVPETCRTGGTNENHPKMNGEVVHLGQPKIYSYMSPTKSPSGRPPLQEENSVAHHESKNLGKPTTETRKKAEVEKKRISSATELSVKSSKQRETECNSIGEYFQTKQELTDVQRNTALTPVDKLQSQKMVKNKSQRRKAQRKKSPNRKLTDYYPVRRSCRKSKTELESEEKMRIDELIQTGKEDGMKMDMIIGKGRGVIATRDFQRGEFVVEYHGDLIEITDAKRREASYAQDSATGCYMYYFQYLNKTYCIDATRETGRLGRLINHSKSGNCHTKLHNISNVPHLILVASRDILVGEELLYDYGDRRKSSIEAHPWLKN</sequence>